<sequence length="792" mass="87554">MDSRWKLPFMSNKGTPEQPMRKPLSGSYSHNSAGPTPNMSPFEQKPPLPTHMDVRRPSGPFRIVKATSTEDALTNCIIVSPMDFKQQYIIVDNSRVFSTKPVPGFPQGCLGASQPHREWASWSLNQQVHVADYDPYGPHGAPYLHSMTLEVDFQNRNRTTNEPFDGEEMAKLFCSSYQSQVFSPGQKIVFDFRSYNIKATVRTISCVDLLIGENQDAENTADTSKRGLLTSQTEIQFFKAAHSALRLKASMTRPASNAILQPGFKFEDMGIGGLDSEFSAIFRRAFASRLFPPGMVEKLGINHVKGILLYGPPGTGKTLIARQIGKMLNAREPKIVNGPEILNKYVGQSEENVRKLFADAEREYRDRGEESGLHIIIFDELDAICKKRGSSGGDTGVGDQVVNQLLAKMDGVDQLNNILVIGMTNRKDMIDEALLRPGRLEVHMEISLPDEHGRLQILKIHTSRMASNGILENDVDMEELASLTKNFSGAEIAGLIKSASSFAFYRHIKVGTTAAVSGNLENIKVNRNDFLNALSEVRPAYGVSEEELESRVQGGIINFGKHIEEIITEGKLFVQQVKNSERTRLVSVLLSGPIASGKTALAATIALGSEFPFVKLVSAESMVGMNENARVAHVNRVFEDSYKSPLSVIVVDEIERIIDWVPIGPRFSNTLLQTLMVLFKKQPPKGHRLLILATTSERTMLSRMDMTQSFDAEIAVPNVSNVTELDRIIQSIDSFADSNVRADTLQRLQNFTGTDAVNVGVAKILMIAETAKQDVDVVSCFVEAMARAIPME</sequence>
<reference key="1">
    <citation type="journal article" date="2002" name="Nature">
        <title>The genome sequence of Schizosaccharomyces pombe.</title>
        <authorList>
            <person name="Wood V."/>
            <person name="Gwilliam R."/>
            <person name="Rajandream M.A."/>
            <person name="Lyne M.H."/>
            <person name="Lyne R."/>
            <person name="Stewart A."/>
            <person name="Sgouros J.G."/>
            <person name="Peat N."/>
            <person name="Hayles J."/>
            <person name="Baker S.G."/>
            <person name="Basham D."/>
            <person name="Bowman S."/>
            <person name="Brooks K."/>
            <person name="Brown D."/>
            <person name="Brown S."/>
            <person name="Chillingworth T."/>
            <person name="Churcher C.M."/>
            <person name="Collins M."/>
            <person name="Connor R."/>
            <person name="Cronin A."/>
            <person name="Davis P."/>
            <person name="Feltwell T."/>
            <person name="Fraser A."/>
            <person name="Gentles S."/>
            <person name="Goble A."/>
            <person name="Hamlin N."/>
            <person name="Harris D.E."/>
            <person name="Hidalgo J."/>
            <person name="Hodgson G."/>
            <person name="Holroyd S."/>
            <person name="Hornsby T."/>
            <person name="Howarth S."/>
            <person name="Huckle E.J."/>
            <person name="Hunt S."/>
            <person name="Jagels K."/>
            <person name="James K.D."/>
            <person name="Jones L."/>
            <person name="Jones M."/>
            <person name="Leather S."/>
            <person name="McDonald S."/>
            <person name="McLean J."/>
            <person name="Mooney P."/>
            <person name="Moule S."/>
            <person name="Mungall K.L."/>
            <person name="Murphy L.D."/>
            <person name="Niblett D."/>
            <person name="Odell C."/>
            <person name="Oliver K."/>
            <person name="O'Neil S."/>
            <person name="Pearson D."/>
            <person name="Quail M.A."/>
            <person name="Rabbinowitsch E."/>
            <person name="Rutherford K.M."/>
            <person name="Rutter S."/>
            <person name="Saunders D."/>
            <person name="Seeger K."/>
            <person name="Sharp S."/>
            <person name="Skelton J."/>
            <person name="Simmonds M.N."/>
            <person name="Squares R."/>
            <person name="Squares S."/>
            <person name="Stevens K."/>
            <person name="Taylor K."/>
            <person name="Taylor R.G."/>
            <person name="Tivey A."/>
            <person name="Walsh S.V."/>
            <person name="Warren T."/>
            <person name="Whitehead S."/>
            <person name="Woodward J.R."/>
            <person name="Volckaert G."/>
            <person name="Aert R."/>
            <person name="Robben J."/>
            <person name="Grymonprez B."/>
            <person name="Weltjens I."/>
            <person name="Vanstreels E."/>
            <person name="Rieger M."/>
            <person name="Schaefer M."/>
            <person name="Mueller-Auer S."/>
            <person name="Gabel C."/>
            <person name="Fuchs M."/>
            <person name="Duesterhoeft A."/>
            <person name="Fritzc C."/>
            <person name="Holzer E."/>
            <person name="Moestl D."/>
            <person name="Hilbert H."/>
            <person name="Borzym K."/>
            <person name="Langer I."/>
            <person name="Beck A."/>
            <person name="Lehrach H."/>
            <person name="Reinhardt R."/>
            <person name="Pohl T.M."/>
            <person name="Eger P."/>
            <person name="Zimmermann W."/>
            <person name="Wedler H."/>
            <person name="Wambutt R."/>
            <person name="Purnelle B."/>
            <person name="Goffeau A."/>
            <person name="Cadieu E."/>
            <person name="Dreano S."/>
            <person name="Gloux S."/>
            <person name="Lelaure V."/>
            <person name="Mottier S."/>
            <person name="Galibert F."/>
            <person name="Aves S.J."/>
            <person name="Xiang Z."/>
            <person name="Hunt C."/>
            <person name="Moore K."/>
            <person name="Hurst S.M."/>
            <person name="Lucas M."/>
            <person name="Rochet M."/>
            <person name="Gaillardin C."/>
            <person name="Tallada V.A."/>
            <person name="Garzon A."/>
            <person name="Thode G."/>
            <person name="Daga R.R."/>
            <person name="Cruzado L."/>
            <person name="Jimenez J."/>
            <person name="Sanchez M."/>
            <person name="del Rey F."/>
            <person name="Benito J."/>
            <person name="Dominguez A."/>
            <person name="Revuelta J.L."/>
            <person name="Moreno S."/>
            <person name="Armstrong J."/>
            <person name="Forsburg S.L."/>
            <person name="Cerutti L."/>
            <person name="Lowe T."/>
            <person name="McCombie W.R."/>
            <person name="Paulsen I."/>
            <person name="Potashkin J."/>
            <person name="Shpakovski G.V."/>
            <person name="Ussery D."/>
            <person name="Barrell B.G."/>
            <person name="Nurse P."/>
        </authorList>
    </citation>
    <scope>NUCLEOTIDE SEQUENCE [LARGE SCALE GENOMIC DNA]</scope>
    <source>
        <strain>972 / ATCC 24843</strain>
    </source>
</reference>
<reference key="2">
    <citation type="journal article" date="2008" name="J. Proteome Res.">
        <title>Phosphoproteome analysis of fission yeast.</title>
        <authorList>
            <person name="Wilson-Grady J.T."/>
            <person name="Villen J."/>
            <person name="Gygi S.P."/>
        </authorList>
    </citation>
    <scope>PHOSPHORYLATION [LARGE SCALE ANALYSIS] AT SER-58 AND THR-252</scope>
    <scope>IDENTIFICATION BY MASS SPECTROMETRY</scope>
</reference>
<accession>Q9P7Q4</accession>
<evidence type="ECO:0000250" key="1"/>
<evidence type="ECO:0000255" key="2"/>
<evidence type="ECO:0000256" key="3">
    <source>
        <dbReference type="SAM" id="MobiDB-lite"/>
    </source>
</evidence>
<evidence type="ECO:0000269" key="4">
    <source>
    </source>
</evidence>
<evidence type="ECO:0000305" key="5"/>
<proteinExistence type="evidence at protein level"/>
<name>SEC18_SCHPO</name>
<protein>
    <recommendedName>
        <fullName>Vesicular-fusion protein sec18</fullName>
    </recommendedName>
</protein>
<keyword id="KW-0067">ATP-binding</keyword>
<keyword id="KW-0963">Cytoplasm</keyword>
<keyword id="KW-0931">ER-Golgi transport</keyword>
<keyword id="KW-0547">Nucleotide-binding</keyword>
<keyword id="KW-0597">Phosphoprotein</keyword>
<keyword id="KW-0653">Protein transport</keyword>
<keyword id="KW-1185">Reference proteome</keyword>
<keyword id="KW-0677">Repeat</keyword>
<keyword id="KW-0813">Transport</keyword>
<feature type="chain" id="PRO_0000084570" description="Vesicular-fusion protein sec18">
    <location>
        <begin position="1"/>
        <end position="792"/>
    </location>
</feature>
<feature type="region of interest" description="Disordered" evidence="3">
    <location>
        <begin position="1"/>
        <end position="46"/>
    </location>
</feature>
<feature type="compositionally biased region" description="Polar residues" evidence="3">
    <location>
        <begin position="26"/>
        <end position="41"/>
    </location>
</feature>
<feature type="binding site" evidence="2">
    <location>
        <begin position="311"/>
        <end position="318"/>
    </location>
    <ligand>
        <name>ATP</name>
        <dbReference type="ChEBI" id="CHEBI:30616"/>
    </ligand>
</feature>
<feature type="binding site" evidence="2">
    <location>
        <begin position="592"/>
        <end position="599"/>
    </location>
    <ligand>
        <name>ATP</name>
        <dbReference type="ChEBI" id="CHEBI:30616"/>
    </ligand>
</feature>
<feature type="modified residue" description="Phosphoserine" evidence="4">
    <location>
        <position position="58"/>
    </location>
</feature>
<feature type="modified residue" description="Phosphothreonine" evidence="4">
    <location>
        <position position="252"/>
    </location>
</feature>
<dbReference type="EMBL" id="CU329670">
    <property type="protein sequence ID" value="CAB75779.1"/>
    <property type="molecule type" value="Genomic_DNA"/>
</dbReference>
<dbReference type="PIR" id="T50122">
    <property type="entry name" value="T50122"/>
</dbReference>
<dbReference type="RefSeq" id="NP_594690.1">
    <property type="nucleotide sequence ID" value="NM_001020119.2"/>
</dbReference>
<dbReference type="SMR" id="Q9P7Q4"/>
<dbReference type="BioGRID" id="278874">
    <property type="interactions" value="22"/>
</dbReference>
<dbReference type="FunCoup" id="Q9P7Q4">
    <property type="interactions" value="482"/>
</dbReference>
<dbReference type="IntAct" id="Q9P7Q4">
    <property type="interactions" value="2"/>
</dbReference>
<dbReference type="STRING" id="284812.Q9P7Q4"/>
<dbReference type="iPTMnet" id="Q9P7Q4"/>
<dbReference type="PaxDb" id="4896-SPAC1834.11c.1"/>
<dbReference type="EnsemblFungi" id="SPAC1834.11c.1">
    <property type="protein sequence ID" value="SPAC1834.11c.1:pep"/>
    <property type="gene ID" value="SPAC1834.11c"/>
</dbReference>
<dbReference type="GeneID" id="2542410"/>
<dbReference type="KEGG" id="spo:2542410"/>
<dbReference type="PomBase" id="SPAC1834.11c">
    <property type="gene designation" value="sec18"/>
</dbReference>
<dbReference type="VEuPathDB" id="FungiDB:SPAC1834.11c"/>
<dbReference type="eggNOG" id="KOG0741">
    <property type="taxonomic scope" value="Eukaryota"/>
</dbReference>
<dbReference type="HOGENOM" id="CLU_008037_2_0_1"/>
<dbReference type="InParanoid" id="Q9P7Q4"/>
<dbReference type="OMA" id="CFDNEIA"/>
<dbReference type="PhylomeDB" id="Q9P7Q4"/>
<dbReference type="Reactome" id="R-SPO-204005">
    <property type="pathway name" value="COPII-mediated vesicle transport"/>
</dbReference>
<dbReference type="Reactome" id="R-SPO-6807878">
    <property type="pathway name" value="COPI-mediated anterograde transport"/>
</dbReference>
<dbReference type="Reactome" id="R-SPO-6811434">
    <property type="pathway name" value="COPI-dependent Golgi-to-ER retrograde traffic"/>
</dbReference>
<dbReference type="Reactome" id="R-SPO-6811438">
    <property type="pathway name" value="Intra-Golgi traffic"/>
</dbReference>
<dbReference type="Reactome" id="R-SPO-6811440">
    <property type="pathway name" value="Retrograde transport at the Trans-Golgi-Network"/>
</dbReference>
<dbReference type="PRO" id="PR:Q9P7Q4"/>
<dbReference type="Proteomes" id="UP000002485">
    <property type="component" value="Chromosome I"/>
</dbReference>
<dbReference type="GO" id="GO:0005737">
    <property type="term" value="C:cytoplasm"/>
    <property type="evidence" value="ECO:0007005"/>
    <property type="project" value="PomBase"/>
</dbReference>
<dbReference type="GO" id="GO:0005795">
    <property type="term" value="C:Golgi stack"/>
    <property type="evidence" value="ECO:0000318"/>
    <property type="project" value="GO_Central"/>
</dbReference>
<dbReference type="GO" id="GO:0005524">
    <property type="term" value="F:ATP binding"/>
    <property type="evidence" value="ECO:0000255"/>
    <property type="project" value="PomBase"/>
</dbReference>
<dbReference type="GO" id="GO:0016887">
    <property type="term" value="F:ATP hydrolysis activity"/>
    <property type="evidence" value="ECO:0000318"/>
    <property type="project" value="GO_Central"/>
</dbReference>
<dbReference type="GO" id="GO:0006888">
    <property type="term" value="P:endoplasmic reticulum to Golgi vesicle-mediated transport"/>
    <property type="evidence" value="ECO:0000266"/>
    <property type="project" value="PomBase"/>
</dbReference>
<dbReference type="GO" id="GO:0043001">
    <property type="term" value="P:Golgi to plasma membrane protein transport"/>
    <property type="evidence" value="ECO:0000318"/>
    <property type="project" value="GO_Central"/>
</dbReference>
<dbReference type="GO" id="GO:0006891">
    <property type="term" value="P:intra-Golgi vesicle-mediated transport"/>
    <property type="evidence" value="ECO:0000318"/>
    <property type="project" value="GO_Central"/>
</dbReference>
<dbReference type="GO" id="GO:0006886">
    <property type="term" value="P:intracellular protein transport"/>
    <property type="evidence" value="ECO:0000305"/>
    <property type="project" value="PomBase"/>
</dbReference>
<dbReference type="GO" id="GO:0035494">
    <property type="term" value="P:SNARE complex disassembly"/>
    <property type="evidence" value="ECO:0007669"/>
    <property type="project" value="InterPro"/>
</dbReference>
<dbReference type="GO" id="GO:0042144">
    <property type="term" value="P:vacuole fusion, non-autophagic"/>
    <property type="evidence" value="ECO:0000266"/>
    <property type="project" value="PomBase"/>
</dbReference>
<dbReference type="CDD" id="cd00009">
    <property type="entry name" value="AAA"/>
    <property type="match status" value="1"/>
</dbReference>
<dbReference type="CDD" id="cd19504">
    <property type="entry name" value="RecA-like_NSF-SEC18_r1-like"/>
    <property type="match status" value="1"/>
</dbReference>
<dbReference type="FunFam" id="1.10.8.60:FF:000026">
    <property type="entry name" value="vesicle-fusing ATPase isoform X1"/>
    <property type="match status" value="1"/>
</dbReference>
<dbReference type="FunFam" id="3.40.50.300:FF:000166">
    <property type="entry name" value="vesicle-fusing ATPase isoform X1"/>
    <property type="match status" value="1"/>
</dbReference>
<dbReference type="FunFam" id="2.40.40.20:FF:000012">
    <property type="entry name" value="Vesicle-fusing ATPase protein"/>
    <property type="match status" value="1"/>
</dbReference>
<dbReference type="FunFam" id="3.40.50.300:FF:000187">
    <property type="entry name" value="Vesicular-fusion ATPase SEC18"/>
    <property type="match status" value="1"/>
</dbReference>
<dbReference type="Gene3D" id="1.10.8.60">
    <property type="match status" value="1"/>
</dbReference>
<dbReference type="Gene3D" id="2.40.40.20">
    <property type="match status" value="1"/>
</dbReference>
<dbReference type="Gene3D" id="3.10.330.10">
    <property type="match status" value="1"/>
</dbReference>
<dbReference type="Gene3D" id="3.40.50.300">
    <property type="entry name" value="P-loop containing nucleotide triphosphate hydrolases"/>
    <property type="match status" value="2"/>
</dbReference>
<dbReference type="InterPro" id="IPR003593">
    <property type="entry name" value="AAA+_ATPase"/>
</dbReference>
<dbReference type="InterPro" id="IPR041569">
    <property type="entry name" value="AAA_lid_3"/>
</dbReference>
<dbReference type="InterPro" id="IPR009010">
    <property type="entry name" value="Asp_de-COase-like_dom_sf"/>
</dbReference>
<dbReference type="InterPro" id="IPR003959">
    <property type="entry name" value="ATPase_AAA_core"/>
</dbReference>
<dbReference type="InterPro" id="IPR003960">
    <property type="entry name" value="ATPase_AAA_CS"/>
</dbReference>
<dbReference type="InterPro" id="IPR004201">
    <property type="entry name" value="Cdc48_dom2"/>
</dbReference>
<dbReference type="InterPro" id="IPR029067">
    <property type="entry name" value="CDC48_domain_2-like_sf"/>
</dbReference>
<dbReference type="InterPro" id="IPR003338">
    <property type="entry name" value="CDC4_N-term_subdom"/>
</dbReference>
<dbReference type="InterPro" id="IPR027417">
    <property type="entry name" value="P-loop_NTPase"/>
</dbReference>
<dbReference type="InterPro" id="IPR039812">
    <property type="entry name" value="Vesicle-fus_ATPase"/>
</dbReference>
<dbReference type="PANTHER" id="PTHR23078:SF3">
    <property type="entry name" value="VESICLE-FUSING ATPASE"/>
    <property type="match status" value="1"/>
</dbReference>
<dbReference type="PANTHER" id="PTHR23078">
    <property type="entry name" value="VESICULAR-FUSION PROTEIN NSF"/>
    <property type="match status" value="1"/>
</dbReference>
<dbReference type="Pfam" id="PF00004">
    <property type="entry name" value="AAA"/>
    <property type="match status" value="2"/>
</dbReference>
<dbReference type="Pfam" id="PF17862">
    <property type="entry name" value="AAA_lid_3"/>
    <property type="match status" value="1"/>
</dbReference>
<dbReference type="Pfam" id="PF02933">
    <property type="entry name" value="CDC48_2"/>
    <property type="match status" value="1"/>
</dbReference>
<dbReference type="SMART" id="SM00382">
    <property type="entry name" value="AAA"/>
    <property type="match status" value="2"/>
</dbReference>
<dbReference type="SMART" id="SM01072">
    <property type="entry name" value="CDC48_2"/>
    <property type="match status" value="1"/>
</dbReference>
<dbReference type="SMART" id="SM01073">
    <property type="entry name" value="CDC48_N"/>
    <property type="match status" value="1"/>
</dbReference>
<dbReference type="SUPFAM" id="SSF50692">
    <property type="entry name" value="ADC-like"/>
    <property type="match status" value="1"/>
</dbReference>
<dbReference type="SUPFAM" id="SSF54585">
    <property type="entry name" value="Cdc48 domain 2-like"/>
    <property type="match status" value="1"/>
</dbReference>
<dbReference type="SUPFAM" id="SSF52540">
    <property type="entry name" value="P-loop containing nucleoside triphosphate hydrolases"/>
    <property type="match status" value="2"/>
</dbReference>
<dbReference type="PROSITE" id="PS00674">
    <property type="entry name" value="AAA"/>
    <property type="match status" value="1"/>
</dbReference>
<organism>
    <name type="scientific">Schizosaccharomyces pombe (strain 972 / ATCC 24843)</name>
    <name type="common">Fission yeast</name>
    <dbReference type="NCBI Taxonomy" id="284812"/>
    <lineage>
        <taxon>Eukaryota</taxon>
        <taxon>Fungi</taxon>
        <taxon>Dikarya</taxon>
        <taxon>Ascomycota</taxon>
        <taxon>Taphrinomycotina</taxon>
        <taxon>Schizosaccharomycetes</taxon>
        <taxon>Schizosaccharomycetales</taxon>
        <taxon>Schizosaccharomycetaceae</taxon>
        <taxon>Schizosaccharomyces</taxon>
    </lineage>
</organism>
<gene>
    <name type="primary">sec18</name>
    <name type="ORF">SPAC1834.11c</name>
</gene>
<comment type="function">
    <text evidence="1">Required for vesicle-mediated transport. Catalyzes the fusion of transport vesicles within the Golgi cisternae. Is also required for transport from the endoplasmic reticulum to the Golgi stack. Seems to function as a fusion protein required for the delivery of cargo proteins to all compartments of the Golgi stack independent of vesicle origin (By similarity).</text>
</comment>
<comment type="subcellular location">
    <subcellularLocation>
        <location evidence="1">Cytoplasm</location>
    </subcellularLocation>
</comment>
<comment type="similarity">
    <text evidence="5">Belongs to the AAA ATPase family.</text>
</comment>